<dbReference type="EMBL" id="BA000043">
    <property type="protein sequence ID" value="BAD75405.1"/>
    <property type="molecule type" value="Genomic_DNA"/>
</dbReference>
<dbReference type="PDB" id="1YR1">
    <property type="method" value="NMR"/>
    <property type="chains" value="A=117-233"/>
</dbReference>
<dbReference type="PDB" id="2ALJ">
    <property type="method" value="NMR"/>
    <property type="chains" value="A=117-233"/>
</dbReference>
<dbReference type="PDBsum" id="1YR1"/>
<dbReference type="PDBsum" id="2ALJ"/>
<dbReference type="BMRB" id="Q5L0X5"/>
<dbReference type="SMR" id="Q5L0X5"/>
<dbReference type="STRING" id="235909.GK1120"/>
<dbReference type="KEGG" id="gka:GK1120"/>
<dbReference type="eggNOG" id="COG1589">
    <property type="taxonomic scope" value="Bacteria"/>
</dbReference>
<dbReference type="HOGENOM" id="CLU_046278_2_1_9"/>
<dbReference type="EvolutionaryTrace" id="Q5L0X5"/>
<dbReference type="Proteomes" id="UP000001172">
    <property type="component" value="Chromosome"/>
</dbReference>
<dbReference type="GO" id="GO:0032153">
    <property type="term" value="C:cell division site"/>
    <property type="evidence" value="ECO:0007669"/>
    <property type="project" value="UniProtKB-UniRule"/>
</dbReference>
<dbReference type="GO" id="GO:0005886">
    <property type="term" value="C:plasma membrane"/>
    <property type="evidence" value="ECO:0007669"/>
    <property type="project" value="UniProtKB-SubCell"/>
</dbReference>
<dbReference type="GO" id="GO:0043093">
    <property type="term" value="P:FtsZ-dependent cytokinesis"/>
    <property type="evidence" value="ECO:0007669"/>
    <property type="project" value="UniProtKB-UniRule"/>
</dbReference>
<dbReference type="Gene3D" id="3.40.50.10960">
    <property type="match status" value="1"/>
</dbReference>
<dbReference type="Gene3D" id="3.10.20.310">
    <property type="entry name" value="membrane protein fhac"/>
    <property type="match status" value="1"/>
</dbReference>
<dbReference type="HAMAP" id="MF_00912">
    <property type="entry name" value="DivIB"/>
    <property type="match status" value="1"/>
</dbReference>
<dbReference type="InterPro" id="IPR005548">
    <property type="entry name" value="Cell_div_FtsQ/DivIB_C"/>
</dbReference>
<dbReference type="InterPro" id="IPR026580">
    <property type="entry name" value="DivIB"/>
</dbReference>
<dbReference type="InterPro" id="IPR050487">
    <property type="entry name" value="FtsQ_DivIB"/>
</dbReference>
<dbReference type="InterPro" id="IPR034746">
    <property type="entry name" value="POTRA"/>
</dbReference>
<dbReference type="InterPro" id="IPR013685">
    <property type="entry name" value="POTRA_FtsQ_type"/>
</dbReference>
<dbReference type="PANTHER" id="PTHR37820">
    <property type="entry name" value="CELL DIVISION PROTEIN DIVIB"/>
    <property type="match status" value="1"/>
</dbReference>
<dbReference type="PANTHER" id="PTHR37820:SF1">
    <property type="entry name" value="CELL DIVISION PROTEIN FTSQ"/>
    <property type="match status" value="1"/>
</dbReference>
<dbReference type="Pfam" id="PF03799">
    <property type="entry name" value="FtsQ_DivIB_C"/>
    <property type="match status" value="1"/>
</dbReference>
<dbReference type="Pfam" id="PF08478">
    <property type="entry name" value="POTRA_1"/>
    <property type="match status" value="1"/>
</dbReference>
<dbReference type="PROSITE" id="PS51779">
    <property type="entry name" value="POTRA"/>
    <property type="match status" value="1"/>
</dbReference>
<evidence type="ECO:0000255" key="1">
    <source>
        <dbReference type="HAMAP-Rule" id="MF_00912"/>
    </source>
</evidence>
<evidence type="ECO:0000255" key="2">
    <source>
        <dbReference type="PROSITE-ProRule" id="PRU01115"/>
    </source>
</evidence>
<evidence type="ECO:0000269" key="3">
    <source>
    </source>
</evidence>
<evidence type="ECO:0007829" key="4">
    <source>
        <dbReference type="PDB" id="1YR1"/>
    </source>
</evidence>
<evidence type="ECO:0007829" key="5">
    <source>
        <dbReference type="PDB" id="2ALJ"/>
    </source>
</evidence>
<keyword id="KW-0002">3D-structure</keyword>
<keyword id="KW-0131">Cell cycle</keyword>
<keyword id="KW-0132">Cell division</keyword>
<keyword id="KW-1003">Cell membrane</keyword>
<keyword id="KW-0472">Membrane</keyword>
<keyword id="KW-1185">Reference proteome</keyword>
<keyword id="KW-0812">Transmembrane</keyword>
<keyword id="KW-1133">Transmembrane helix</keyword>
<feature type="chain" id="PRO_0000414769" description="Cell division protein DivIB">
    <location>
        <begin position="1"/>
        <end position="261"/>
    </location>
</feature>
<feature type="topological domain" description="Cytoplasmic" evidence="1">
    <location>
        <begin position="1"/>
        <end position="27"/>
    </location>
</feature>
<feature type="transmembrane region" description="Helical" evidence="1">
    <location>
        <begin position="28"/>
        <end position="48"/>
    </location>
</feature>
<feature type="topological domain" description="Extracellular" evidence="1">
    <location>
        <begin position="49"/>
        <end position="261"/>
    </location>
</feature>
<feature type="domain" description="POTRA" evidence="2">
    <location>
        <begin position="50"/>
        <end position="118"/>
    </location>
</feature>
<feature type="region of interest" description="Alpha">
    <location>
        <begin position="47"/>
        <end position="117"/>
    </location>
</feature>
<feature type="region of interest" description="Beta">
    <location>
        <begin position="118"/>
        <end position="230"/>
    </location>
</feature>
<feature type="region of interest" description="Gamma">
    <location>
        <begin position="231"/>
        <end position="260"/>
    </location>
</feature>
<feature type="strand" evidence="4">
    <location>
        <begin position="120"/>
        <end position="126"/>
    </location>
</feature>
<feature type="strand" evidence="4">
    <location>
        <begin position="129"/>
        <end position="134"/>
    </location>
</feature>
<feature type="helix" evidence="5">
    <location>
        <begin position="141"/>
        <end position="143"/>
    </location>
</feature>
<feature type="strand" evidence="4">
    <location>
        <begin position="145"/>
        <end position="147"/>
    </location>
</feature>
<feature type="strand" evidence="4">
    <location>
        <begin position="155"/>
        <end position="157"/>
    </location>
</feature>
<feature type="helix" evidence="4">
    <location>
        <begin position="161"/>
        <end position="173"/>
    </location>
</feature>
<feature type="helix" evidence="4">
    <location>
        <begin position="176"/>
        <end position="180"/>
    </location>
</feature>
<feature type="strand" evidence="4">
    <location>
        <begin position="183"/>
        <end position="187"/>
    </location>
</feature>
<feature type="strand" evidence="4">
    <location>
        <begin position="196"/>
        <end position="200"/>
    </location>
</feature>
<feature type="strand" evidence="4">
    <location>
        <begin position="206"/>
        <end position="213"/>
    </location>
</feature>
<feature type="helix" evidence="4">
    <location>
        <begin position="214"/>
        <end position="219"/>
    </location>
</feature>
<feature type="helix" evidence="4">
    <location>
        <begin position="222"/>
        <end position="230"/>
    </location>
</feature>
<organism>
    <name type="scientific">Geobacillus kaustophilus (strain HTA426)</name>
    <dbReference type="NCBI Taxonomy" id="235909"/>
    <lineage>
        <taxon>Bacteria</taxon>
        <taxon>Bacillati</taxon>
        <taxon>Bacillota</taxon>
        <taxon>Bacilli</taxon>
        <taxon>Bacillales</taxon>
        <taxon>Anoxybacillaceae</taxon>
        <taxon>Geobacillus</taxon>
        <taxon>Geobacillus thermoleovorans group</taxon>
    </lineage>
</organism>
<name>DIVIB_GEOKA</name>
<comment type="function">
    <text evidence="1">Cell division protein that may be involved in stabilizing or promoting the assembly of the division complex.</text>
</comment>
<comment type="subcellular location">
    <subcellularLocation>
        <location evidence="1">Cell membrane</location>
        <topology evidence="1">Single-pass type II membrane protein</topology>
    </subcellularLocation>
    <text evidence="1">Localizes to the division septum.</text>
</comment>
<comment type="domain">
    <text evidence="3">The extracellular region contains three distinct subdomains: a membrane proximal alpha domain, a central beta domain and a C-terminal gamma domain. The alpha domain might serve as a chaperone that stabilizes FtsL. The gamma domain is required for interaction with other divisomal proteins. The beta domain might modulate protein-protein interactions of the flanking alpha and gamma domains.</text>
</comment>
<comment type="similarity">
    <text evidence="1">Belongs to the FtsQ/DivIB family. DivIB subfamily.</text>
</comment>
<proteinExistence type="evidence at protein level"/>
<protein>
    <recommendedName>
        <fullName evidence="1">Cell division protein DivIB</fullName>
    </recommendedName>
</protein>
<reference key="1">
    <citation type="journal article" date="2004" name="Nucleic Acids Res.">
        <title>Thermoadaptation trait revealed by the genome sequence of thermophilic Geobacillus kaustophilus.</title>
        <authorList>
            <person name="Takami H."/>
            <person name="Takaki Y."/>
            <person name="Chee G.-J."/>
            <person name="Nishi S."/>
            <person name="Shimamura S."/>
            <person name="Suzuki H."/>
            <person name="Matsui S."/>
            <person name="Uchiyama I."/>
        </authorList>
    </citation>
    <scope>NUCLEOTIDE SEQUENCE [LARGE SCALE GENOMIC DNA]</scope>
    <source>
        <strain>HTA426</strain>
    </source>
</reference>
<reference key="2">
    <citation type="journal article" date="2006" name="Proc. Natl. Acad. Sci. U.S.A.">
        <title>Domain architecture and structure of the bacterial cell division protein DivIB.</title>
        <authorList>
            <person name="Robson S.A."/>
            <person name="King G.F."/>
        </authorList>
    </citation>
    <scope>STRUCTURE BY NMR OF 117-233</scope>
    <scope>DOMAIN</scope>
</reference>
<accession>Q5L0X5</accession>
<gene>
    <name evidence="1" type="primary">divIB</name>
    <name type="ordered locus">GK1120</name>
</gene>
<sequence>MEKGKVVVLEDRVPKLKERRRQKANRRLIAYLSFFFLFILCVLYFQSPLGAVGHVEVSGNRHLTAERIISLSGITKRTSFWKVNEQNVEKKLTRHPEIKEATVEKQLPNTIAIHVREWRRIAYVYDRQTFFPLLENGRLLKQEGTKTAPSDAPVLVGWKDGDAIAEMTGQLAELPAAVLGAMSEIHYKPTREYEDRVIVYMNDGYEVSATIRQFADKLSHYPAIAAALDRNVKGVIHLEVGSYFVPYSPPKKEDGDETTSP</sequence>